<protein>
    <recommendedName>
        <fullName evidence="4">Sulfite exporter TauE/SafE family protein 5</fullName>
    </recommendedName>
</protein>
<feature type="chain" id="PRO_5009333691" description="Sulfite exporter TauE/SafE family protein 5" evidence="1">
    <location>
        <begin position="1"/>
        <end position="449"/>
    </location>
</feature>
<feature type="transmembrane region" description="Helical" evidence="1">
    <location>
        <begin position="1"/>
        <end position="21"/>
    </location>
</feature>
<feature type="transmembrane region" description="Helical" evidence="1">
    <location>
        <begin position="57"/>
        <end position="77"/>
    </location>
</feature>
<feature type="transmembrane region" description="Helical" evidence="1">
    <location>
        <begin position="78"/>
        <end position="98"/>
    </location>
</feature>
<feature type="transmembrane region" description="Helical" evidence="1">
    <location>
        <begin position="101"/>
        <end position="121"/>
    </location>
</feature>
<feature type="transmembrane region" description="Helical" evidence="1">
    <location>
        <begin position="127"/>
        <end position="147"/>
    </location>
</feature>
<feature type="transmembrane region" description="Helical" evidence="1">
    <location>
        <begin position="150"/>
        <end position="170"/>
    </location>
</feature>
<feature type="transmembrane region" description="Helical" evidence="1">
    <location>
        <begin position="224"/>
        <end position="244"/>
    </location>
</feature>
<feature type="transmembrane region" description="Helical" evidence="1">
    <location>
        <begin position="259"/>
        <end position="279"/>
    </location>
</feature>
<feature type="transmembrane region" description="Helical" evidence="1">
    <location>
        <begin position="315"/>
        <end position="335"/>
    </location>
</feature>
<feature type="transmembrane region" description="Helical" evidence="1">
    <location>
        <begin position="353"/>
        <end position="373"/>
    </location>
</feature>
<feature type="transmembrane region" description="Helical" evidence="1">
    <location>
        <begin position="378"/>
        <end position="398"/>
    </location>
</feature>
<feature type="transmembrane region" description="Helical" evidence="1">
    <location>
        <begin position="409"/>
        <end position="429"/>
    </location>
</feature>
<feature type="sequence conflict" description="In Ref. 3; BX827729." evidence="2" ref="3">
    <original>K</original>
    <variation>I</variation>
    <location>
        <position position="298"/>
    </location>
</feature>
<sequence>MKTLFVLFLLLLCVFAINANQEEENLPQSHHNLLHKVQQWRTSLKESSAAELKLSSAIIMAGVLCFLAALISSAGGIGGGGLFIPIMTIVAGVDLKTASSFSAFMVTGGSIANVISNLFGGKALLDYDLALLLEPCMLLGVSIGVICNRVLPEWLITVLFAVFLAWSSLKTCRSGVKFWKLESEIARESGHGRPERGQGQIEEETKNLKAPLLEAQATKNKSKIPWTKLGVLVIVWASFFVIYLLRGNKDGKGIITIKPCGVEYWILLSLQIPLALIFTKLALSRTESRQEQSPNDQKNQEGTRLDKSTRLKFPAMSFLAGLLGGIFGIGGGMLISPLLLQSGIPPQITAATTSFMVFFSATMSAVQYLLLGMQNTDTAYVFSFICFLASLLGLVLVQKAVAQFGRASIIVFSVGTVMSLSTVLMTSFGALDVWTDYVAGKDMGFKLPC</sequence>
<reference key="1">
    <citation type="journal article" date="1999" name="Nature">
        <title>Sequence and analysis of chromosome 4 of the plant Arabidopsis thaliana.</title>
        <authorList>
            <person name="Mayer K.F.X."/>
            <person name="Schueller C."/>
            <person name="Wambutt R."/>
            <person name="Murphy G."/>
            <person name="Volckaert G."/>
            <person name="Pohl T."/>
            <person name="Duesterhoeft A."/>
            <person name="Stiekema W."/>
            <person name="Entian K.-D."/>
            <person name="Terryn N."/>
            <person name="Harris B."/>
            <person name="Ansorge W."/>
            <person name="Brandt P."/>
            <person name="Grivell L.A."/>
            <person name="Rieger M."/>
            <person name="Weichselgartner M."/>
            <person name="de Simone V."/>
            <person name="Obermaier B."/>
            <person name="Mache R."/>
            <person name="Mueller M."/>
            <person name="Kreis M."/>
            <person name="Delseny M."/>
            <person name="Puigdomenech P."/>
            <person name="Watson M."/>
            <person name="Schmidtheini T."/>
            <person name="Reichert B."/>
            <person name="Portetelle D."/>
            <person name="Perez-Alonso M."/>
            <person name="Boutry M."/>
            <person name="Bancroft I."/>
            <person name="Vos P."/>
            <person name="Hoheisel J."/>
            <person name="Zimmermann W."/>
            <person name="Wedler H."/>
            <person name="Ridley P."/>
            <person name="Langham S.-A."/>
            <person name="McCullagh B."/>
            <person name="Bilham L."/>
            <person name="Robben J."/>
            <person name="van der Schueren J."/>
            <person name="Grymonprez B."/>
            <person name="Chuang Y.-J."/>
            <person name="Vandenbussche F."/>
            <person name="Braeken M."/>
            <person name="Weltjens I."/>
            <person name="Voet M."/>
            <person name="Bastiaens I."/>
            <person name="Aert R."/>
            <person name="Defoor E."/>
            <person name="Weitzenegger T."/>
            <person name="Bothe G."/>
            <person name="Ramsperger U."/>
            <person name="Hilbert H."/>
            <person name="Braun M."/>
            <person name="Holzer E."/>
            <person name="Brandt A."/>
            <person name="Peters S."/>
            <person name="van Staveren M."/>
            <person name="Dirkse W."/>
            <person name="Mooijman P."/>
            <person name="Klein Lankhorst R."/>
            <person name="Rose M."/>
            <person name="Hauf J."/>
            <person name="Koetter P."/>
            <person name="Berneiser S."/>
            <person name="Hempel S."/>
            <person name="Feldpausch M."/>
            <person name="Lamberth S."/>
            <person name="Van den Daele H."/>
            <person name="De Keyser A."/>
            <person name="Buysshaert C."/>
            <person name="Gielen J."/>
            <person name="Villarroel R."/>
            <person name="De Clercq R."/>
            <person name="van Montagu M."/>
            <person name="Rogers J."/>
            <person name="Cronin A."/>
            <person name="Quail M.A."/>
            <person name="Bray-Allen S."/>
            <person name="Clark L."/>
            <person name="Doggett J."/>
            <person name="Hall S."/>
            <person name="Kay M."/>
            <person name="Lennard N."/>
            <person name="McLay K."/>
            <person name="Mayes R."/>
            <person name="Pettett A."/>
            <person name="Rajandream M.A."/>
            <person name="Lyne M."/>
            <person name="Benes V."/>
            <person name="Rechmann S."/>
            <person name="Borkova D."/>
            <person name="Bloecker H."/>
            <person name="Scharfe M."/>
            <person name="Grimm M."/>
            <person name="Loehnert T.-H."/>
            <person name="Dose S."/>
            <person name="de Haan M."/>
            <person name="Maarse A.C."/>
            <person name="Schaefer M."/>
            <person name="Mueller-Auer S."/>
            <person name="Gabel C."/>
            <person name="Fuchs M."/>
            <person name="Fartmann B."/>
            <person name="Granderath K."/>
            <person name="Dauner D."/>
            <person name="Herzl A."/>
            <person name="Neumann S."/>
            <person name="Argiriou A."/>
            <person name="Vitale D."/>
            <person name="Liguori R."/>
            <person name="Piravandi E."/>
            <person name="Massenet O."/>
            <person name="Quigley F."/>
            <person name="Clabauld G."/>
            <person name="Muendlein A."/>
            <person name="Felber R."/>
            <person name="Schnabl S."/>
            <person name="Hiller R."/>
            <person name="Schmidt W."/>
            <person name="Lecharny A."/>
            <person name="Aubourg S."/>
            <person name="Chefdor F."/>
            <person name="Cooke R."/>
            <person name="Berger C."/>
            <person name="Monfort A."/>
            <person name="Casacuberta E."/>
            <person name="Gibbons T."/>
            <person name="Weber N."/>
            <person name="Vandenbol M."/>
            <person name="Bargues M."/>
            <person name="Terol J."/>
            <person name="Torres A."/>
            <person name="Perez-Perez A."/>
            <person name="Purnelle B."/>
            <person name="Bent E."/>
            <person name="Johnson S."/>
            <person name="Tacon D."/>
            <person name="Jesse T."/>
            <person name="Heijnen L."/>
            <person name="Schwarz S."/>
            <person name="Scholler P."/>
            <person name="Heber S."/>
            <person name="Francs P."/>
            <person name="Bielke C."/>
            <person name="Frishman D."/>
            <person name="Haase D."/>
            <person name="Lemcke K."/>
            <person name="Mewes H.-W."/>
            <person name="Stocker S."/>
            <person name="Zaccaria P."/>
            <person name="Bevan M."/>
            <person name="Wilson R.K."/>
            <person name="de la Bastide M."/>
            <person name="Habermann K."/>
            <person name="Parnell L."/>
            <person name="Dedhia N."/>
            <person name="Gnoj L."/>
            <person name="Schutz K."/>
            <person name="Huang E."/>
            <person name="Spiegel L."/>
            <person name="Sekhon M."/>
            <person name="Murray J."/>
            <person name="Sheet P."/>
            <person name="Cordes M."/>
            <person name="Abu-Threideh J."/>
            <person name="Stoneking T."/>
            <person name="Kalicki J."/>
            <person name="Graves T."/>
            <person name="Harmon G."/>
            <person name="Edwards J."/>
            <person name="Latreille P."/>
            <person name="Courtney L."/>
            <person name="Cloud J."/>
            <person name="Abbott A."/>
            <person name="Scott K."/>
            <person name="Johnson D."/>
            <person name="Minx P."/>
            <person name="Bentley D."/>
            <person name="Fulton B."/>
            <person name="Miller N."/>
            <person name="Greco T."/>
            <person name="Kemp K."/>
            <person name="Kramer J."/>
            <person name="Fulton L."/>
            <person name="Mardis E."/>
            <person name="Dante M."/>
            <person name="Pepin K."/>
            <person name="Hillier L.W."/>
            <person name="Nelson J."/>
            <person name="Spieth J."/>
            <person name="Ryan E."/>
            <person name="Andrews S."/>
            <person name="Geisel C."/>
            <person name="Layman D."/>
            <person name="Du H."/>
            <person name="Ali J."/>
            <person name="Berghoff A."/>
            <person name="Jones K."/>
            <person name="Drone K."/>
            <person name="Cotton M."/>
            <person name="Joshu C."/>
            <person name="Antonoiu B."/>
            <person name="Zidanic M."/>
            <person name="Strong C."/>
            <person name="Sun H."/>
            <person name="Lamar B."/>
            <person name="Yordan C."/>
            <person name="Ma P."/>
            <person name="Zhong J."/>
            <person name="Preston R."/>
            <person name="Vil D."/>
            <person name="Shekher M."/>
            <person name="Matero A."/>
            <person name="Shah R."/>
            <person name="Swaby I.K."/>
            <person name="O'Shaughnessy A."/>
            <person name="Rodriguez M."/>
            <person name="Hoffman J."/>
            <person name="Till S."/>
            <person name="Granat S."/>
            <person name="Shohdy N."/>
            <person name="Hasegawa A."/>
            <person name="Hameed A."/>
            <person name="Lodhi M."/>
            <person name="Johnson A."/>
            <person name="Chen E."/>
            <person name="Marra M.A."/>
            <person name="Martienssen R."/>
            <person name="McCombie W.R."/>
        </authorList>
    </citation>
    <scope>NUCLEOTIDE SEQUENCE [LARGE SCALE GENOMIC DNA]</scope>
    <source>
        <strain>cv. Columbia</strain>
    </source>
</reference>
<reference key="2">
    <citation type="journal article" date="2017" name="Plant J.">
        <title>Araport11: a complete reannotation of the Arabidopsis thaliana reference genome.</title>
        <authorList>
            <person name="Cheng C.Y."/>
            <person name="Krishnakumar V."/>
            <person name="Chan A.P."/>
            <person name="Thibaud-Nissen F."/>
            <person name="Schobel S."/>
            <person name="Town C.D."/>
        </authorList>
    </citation>
    <scope>GENOME REANNOTATION</scope>
    <source>
        <strain>cv. Columbia</strain>
    </source>
</reference>
<reference key="3">
    <citation type="journal article" date="2004" name="Genome Res.">
        <title>Whole genome sequence comparisons and 'full-length' cDNA sequences: a combined approach to evaluate and improve Arabidopsis genome annotation.</title>
        <authorList>
            <person name="Castelli V."/>
            <person name="Aury J.-M."/>
            <person name="Jaillon O."/>
            <person name="Wincker P."/>
            <person name="Clepet C."/>
            <person name="Menard M."/>
            <person name="Cruaud C."/>
            <person name="Quetier F."/>
            <person name="Scarpelli C."/>
            <person name="Schaechter V."/>
            <person name="Temple G."/>
            <person name="Caboche M."/>
            <person name="Weissenbach J."/>
            <person name="Salanoubat M."/>
        </authorList>
    </citation>
    <scope>NUCLEOTIDE SEQUENCE [LARGE SCALE MRNA]</scope>
    <source>
        <strain>cv. Columbia</strain>
    </source>
</reference>
<dbReference type="EMBL" id="AL021960">
    <property type="protein sequence ID" value="CAA17544.1"/>
    <property type="status" value="ALT_SEQ"/>
    <property type="molecule type" value="Genomic_DNA"/>
</dbReference>
<dbReference type="EMBL" id="AL161554">
    <property type="protein sequence ID" value="CAB79125.1"/>
    <property type="status" value="ALT_SEQ"/>
    <property type="molecule type" value="Genomic_DNA"/>
</dbReference>
<dbReference type="EMBL" id="CP002687">
    <property type="protein sequence ID" value="AEE84432.1"/>
    <property type="molecule type" value="Genomic_DNA"/>
</dbReference>
<dbReference type="EMBL" id="BX827729">
    <property type="status" value="NOT_ANNOTATED_CDS"/>
    <property type="molecule type" value="mRNA"/>
</dbReference>
<dbReference type="PIR" id="T04956">
    <property type="entry name" value="T04956"/>
</dbReference>
<dbReference type="RefSeq" id="NP_193857.3">
    <property type="nucleotide sequence ID" value="NM_118244.4"/>
</dbReference>
<dbReference type="STRING" id="3702.F4JIP9"/>
<dbReference type="PaxDb" id="3702-AT4G21250.1"/>
<dbReference type="ProteomicsDB" id="234237"/>
<dbReference type="EnsemblPlants" id="AT4G21250.1">
    <property type="protein sequence ID" value="AT4G21250.1"/>
    <property type="gene ID" value="AT4G21250"/>
</dbReference>
<dbReference type="GeneID" id="827874"/>
<dbReference type="Gramene" id="AT4G21250.1">
    <property type="protein sequence ID" value="AT4G21250.1"/>
    <property type="gene ID" value="AT4G21250"/>
</dbReference>
<dbReference type="KEGG" id="ath:AT4G21250"/>
<dbReference type="Araport" id="AT4G21250"/>
<dbReference type="TAIR" id="AT4G21250"/>
<dbReference type="eggNOG" id="ENOG502QWNB">
    <property type="taxonomic scope" value="Eukaryota"/>
</dbReference>
<dbReference type="HOGENOM" id="CLU_029011_2_1_1"/>
<dbReference type="InParanoid" id="F4JIP9"/>
<dbReference type="OMA" id="IPIMTIV"/>
<dbReference type="PRO" id="PR:F4JIP9"/>
<dbReference type="Proteomes" id="UP000006548">
    <property type="component" value="Chromosome 4"/>
</dbReference>
<dbReference type="ExpressionAtlas" id="F4JIP9">
    <property type="expression patterns" value="baseline and differential"/>
</dbReference>
<dbReference type="GO" id="GO:0016020">
    <property type="term" value="C:membrane"/>
    <property type="evidence" value="ECO:0007669"/>
    <property type="project" value="UniProtKB-SubCell"/>
</dbReference>
<dbReference type="InterPro" id="IPR002781">
    <property type="entry name" value="TM_pro_TauE-like"/>
</dbReference>
<dbReference type="PANTHER" id="PTHR14255">
    <property type="entry name" value="CEREBLON"/>
    <property type="match status" value="1"/>
</dbReference>
<dbReference type="PANTHER" id="PTHR14255:SF3">
    <property type="entry name" value="SULFITE EXPORTER TAUE_SAFE FAMILY PROTEIN 5-RELATED"/>
    <property type="match status" value="1"/>
</dbReference>
<dbReference type="Pfam" id="PF01925">
    <property type="entry name" value="TauE"/>
    <property type="match status" value="2"/>
</dbReference>
<comment type="subcellular location">
    <subcellularLocation>
        <location evidence="1">Membrane</location>
        <topology evidence="1">Multi-pass membrane protein</topology>
    </subcellularLocation>
</comment>
<comment type="similarity">
    <text evidence="2">Belongs to the 4-toluene sulfonate uptake permease (TSUP) (TC 2.A.102) family.</text>
</comment>
<comment type="sequence caution" evidence="2">
    <conflict type="frameshift">
        <sequence resource="EMBL" id="BX827729"/>
    </conflict>
</comment>
<comment type="sequence caution" evidence="2">
    <conflict type="erroneous gene model prediction">
        <sequence resource="EMBL-CDS" id="CAA17544"/>
    </conflict>
</comment>
<comment type="sequence caution" evidence="2">
    <conflict type="erroneous gene model prediction">
        <sequence resource="EMBL-CDS" id="CAB79125"/>
    </conflict>
</comment>
<organism>
    <name type="scientific">Arabidopsis thaliana</name>
    <name type="common">Mouse-ear cress</name>
    <dbReference type="NCBI Taxonomy" id="3702"/>
    <lineage>
        <taxon>Eukaryota</taxon>
        <taxon>Viridiplantae</taxon>
        <taxon>Streptophyta</taxon>
        <taxon>Embryophyta</taxon>
        <taxon>Tracheophyta</taxon>
        <taxon>Spermatophyta</taxon>
        <taxon>Magnoliopsida</taxon>
        <taxon>eudicotyledons</taxon>
        <taxon>Gunneridae</taxon>
        <taxon>Pentapetalae</taxon>
        <taxon>rosids</taxon>
        <taxon>malvids</taxon>
        <taxon>Brassicales</taxon>
        <taxon>Brassicaceae</taxon>
        <taxon>Camelineae</taxon>
        <taxon>Arabidopsis</taxon>
    </lineage>
</organism>
<gene>
    <name evidence="3" type="ordered locus">At4g21250</name>
    <name evidence="5" type="ORF">F7J7.190</name>
</gene>
<proteinExistence type="evidence at transcript level"/>
<keyword id="KW-0472">Membrane</keyword>
<keyword id="KW-1185">Reference proteome</keyword>
<keyword id="KW-0812">Transmembrane</keyword>
<keyword id="KW-1133">Transmembrane helix</keyword>
<keyword id="KW-0813">Transport</keyword>
<name>TAUE5_ARATH</name>
<accession>F4JIP9</accession>
<accession>O49566</accession>
<evidence type="ECO:0000255" key="1"/>
<evidence type="ECO:0000305" key="2"/>
<evidence type="ECO:0000312" key="3">
    <source>
        <dbReference type="Araport" id="AT4G21250"/>
    </source>
</evidence>
<evidence type="ECO:0000312" key="4">
    <source>
        <dbReference type="EMBL" id="AEE84432.1"/>
    </source>
</evidence>
<evidence type="ECO:0000312" key="5">
    <source>
        <dbReference type="EMBL" id="CAA17544.1"/>
    </source>
</evidence>